<accession>Q0T844</accession>
<comment type="similarity">
    <text evidence="1">Belongs to the UPF0325 family.</text>
</comment>
<evidence type="ECO:0000255" key="1">
    <source>
        <dbReference type="HAMAP-Rule" id="MF_01519"/>
    </source>
</evidence>
<proteinExistence type="inferred from homology"/>
<dbReference type="EMBL" id="CP000266">
    <property type="protein sequence ID" value="ABF02432.1"/>
    <property type="molecule type" value="Genomic_DNA"/>
</dbReference>
<dbReference type="RefSeq" id="WP_000272188.1">
    <property type="nucleotide sequence ID" value="NC_008258.1"/>
</dbReference>
<dbReference type="SMR" id="Q0T844"/>
<dbReference type="KEGG" id="sfv:SFV_0148"/>
<dbReference type="HOGENOM" id="CLU_136774_0_0_6"/>
<dbReference type="Proteomes" id="UP000000659">
    <property type="component" value="Chromosome"/>
</dbReference>
<dbReference type="HAMAP" id="MF_01519">
    <property type="entry name" value="UPF0325"/>
    <property type="match status" value="1"/>
</dbReference>
<dbReference type="InterPro" id="IPR020911">
    <property type="entry name" value="UPF0325"/>
</dbReference>
<dbReference type="NCBIfam" id="NF010213">
    <property type="entry name" value="PRK13677.1"/>
    <property type="match status" value="1"/>
</dbReference>
<dbReference type="Pfam" id="PF11944">
    <property type="entry name" value="DUF3461"/>
    <property type="match status" value="1"/>
</dbReference>
<reference key="1">
    <citation type="journal article" date="2006" name="BMC Genomics">
        <title>Complete genome sequence of Shigella flexneri 5b and comparison with Shigella flexneri 2a.</title>
        <authorList>
            <person name="Nie H."/>
            <person name="Yang F."/>
            <person name="Zhang X."/>
            <person name="Yang J."/>
            <person name="Chen L."/>
            <person name="Wang J."/>
            <person name="Xiong Z."/>
            <person name="Peng J."/>
            <person name="Sun L."/>
            <person name="Dong J."/>
            <person name="Xue Y."/>
            <person name="Xu X."/>
            <person name="Chen S."/>
            <person name="Yao Z."/>
            <person name="Shen Y."/>
            <person name="Jin Q."/>
        </authorList>
    </citation>
    <scope>NUCLEOTIDE SEQUENCE [LARGE SCALE GENOMIC DNA]</scope>
    <source>
        <strain>8401</strain>
    </source>
</reference>
<feature type="chain" id="PRO_0000289322" description="UPF0325 protein YaeH">
    <location>
        <begin position="1"/>
        <end position="128"/>
    </location>
</feature>
<sequence>MYDNLKSLGITNPEEIDRYSLRQEANNDILKIYFQKDKGEFFAKSVKFKYPRQRKTVVADGVGQGYKEVQEISPNLRYIIDELDQICQRDRSEVDLKRKILDDLRHLESVVTNKISEIEADLEKLTRK</sequence>
<organism>
    <name type="scientific">Shigella flexneri serotype 5b (strain 8401)</name>
    <dbReference type="NCBI Taxonomy" id="373384"/>
    <lineage>
        <taxon>Bacteria</taxon>
        <taxon>Pseudomonadati</taxon>
        <taxon>Pseudomonadota</taxon>
        <taxon>Gammaproteobacteria</taxon>
        <taxon>Enterobacterales</taxon>
        <taxon>Enterobacteriaceae</taxon>
        <taxon>Shigella</taxon>
    </lineage>
</organism>
<gene>
    <name evidence="1" type="primary">yaeH</name>
    <name type="ordered locus">SFV_0148</name>
</gene>
<name>YAEH_SHIF8</name>
<protein>
    <recommendedName>
        <fullName evidence="1">UPF0325 protein YaeH</fullName>
    </recommendedName>
</protein>